<comment type="function">
    <text evidence="1">Catalyzes the 2'-O-methylation of the ribose of cytidine 1402 (C1402) in 16S rRNA.</text>
</comment>
<comment type="catalytic activity">
    <reaction evidence="1">
        <text>cytidine(1402) in 16S rRNA + S-adenosyl-L-methionine = 2'-O-methylcytidine(1402) in 16S rRNA + S-adenosyl-L-homocysteine + H(+)</text>
        <dbReference type="Rhea" id="RHEA:42924"/>
        <dbReference type="Rhea" id="RHEA-COMP:10285"/>
        <dbReference type="Rhea" id="RHEA-COMP:10286"/>
        <dbReference type="ChEBI" id="CHEBI:15378"/>
        <dbReference type="ChEBI" id="CHEBI:57856"/>
        <dbReference type="ChEBI" id="CHEBI:59789"/>
        <dbReference type="ChEBI" id="CHEBI:74495"/>
        <dbReference type="ChEBI" id="CHEBI:82748"/>
        <dbReference type="EC" id="2.1.1.198"/>
    </reaction>
</comment>
<comment type="subcellular location">
    <subcellularLocation>
        <location evidence="1">Cytoplasm</location>
    </subcellularLocation>
</comment>
<comment type="similarity">
    <text evidence="1">Belongs to the methyltransferase superfamily. RsmI family.</text>
</comment>
<dbReference type="EC" id="2.1.1.198" evidence="1"/>
<dbReference type="EMBL" id="CP001145">
    <property type="protein sequence ID" value="ACI17210.1"/>
    <property type="molecule type" value="Genomic_DNA"/>
</dbReference>
<dbReference type="SMR" id="B5Y7N9"/>
<dbReference type="STRING" id="309798.COPRO5265_0421"/>
<dbReference type="KEGG" id="cpo:COPRO5265_0421"/>
<dbReference type="eggNOG" id="COG0313">
    <property type="taxonomic scope" value="Bacteria"/>
</dbReference>
<dbReference type="HOGENOM" id="CLU_044779_4_0_9"/>
<dbReference type="OrthoDB" id="9809084at2"/>
<dbReference type="Proteomes" id="UP000001732">
    <property type="component" value="Chromosome"/>
</dbReference>
<dbReference type="GO" id="GO:0005737">
    <property type="term" value="C:cytoplasm"/>
    <property type="evidence" value="ECO:0007669"/>
    <property type="project" value="UniProtKB-SubCell"/>
</dbReference>
<dbReference type="GO" id="GO:0070677">
    <property type="term" value="F:rRNA (cytosine-2'-O-)-methyltransferase activity"/>
    <property type="evidence" value="ECO:0007669"/>
    <property type="project" value="UniProtKB-UniRule"/>
</dbReference>
<dbReference type="CDD" id="cd11648">
    <property type="entry name" value="RsmI"/>
    <property type="match status" value="1"/>
</dbReference>
<dbReference type="Gene3D" id="3.40.1010.10">
    <property type="entry name" value="Cobalt-precorrin-4 Transmethylase, Domain 1"/>
    <property type="match status" value="1"/>
</dbReference>
<dbReference type="Gene3D" id="3.30.950.10">
    <property type="entry name" value="Methyltransferase, Cobalt-precorrin-4 Transmethylase, Domain 2"/>
    <property type="match status" value="1"/>
</dbReference>
<dbReference type="HAMAP" id="MF_01877">
    <property type="entry name" value="16SrRNA_methyltr_I"/>
    <property type="match status" value="1"/>
</dbReference>
<dbReference type="InterPro" id="IPR000878">
    <property type="entry name" value="4pyrrol_Mease"/>
</dbReference>
<dbReference type="InterPro" id="IPR035996">
    <property type="entry name" value="4pyrrol_Methylase_sf"/>
</dbReference>
<dbReference type="InterPro" id="IPR014777">
    <property type="entry name" value="4pyrrole_Mease_sub1"/>
</dbReference>
<dbReference type="InterPro" id="IPR014776">
    <property type="entry name" value="4pyrrole_Mease_sub2"/>
</dbReference>
<dbReference type="InterPro" id="IPR008189">
    <property type="entry name" value="rRNA_ssu_MeTfrase_I"/>
</dbReference>
<dbReference type="NCBIfam" id="TIGR00096">
    <property type="entry name" value="16S rRNA (cytidine(1402)-2'-O)-methyltransferase"/>
    <property type="match status" value="1"/>
</dbReference>
<dbReference type="PANTHER" id="PTHR46111">
    <property type="entry name" value="RIBOSOMAL RNA SMALL SUBUNIT METHYLTRANSFERASE I"/>
    <property type="match status" value="1"/>
</dbReference>
<dbReference type="PANTHER" id="PTHR46111:SF1">
    <property type="entry name" value="RIBOSOMAL RNA SMALL SUBUNIT METHYLTRANSFERASE I"/>
    <property type="match status" value="1"/>
</dbReference>
<dbReference type="Pfam" id="PF00590">
    <property type="entry name" value="TP_methylase"/>
    <property type="match status" value="1"/>
</dbReference>
<dbReference type="PIRSF" id="PIRSF005917">
    <property type="entry name" value="MTase_YraL"/>
    <property type="match status" value="1"/>
</dbReference>
<dbReference type="SUPFAM" id="SSF53790">
    <property type="entry name" value="Tetrapyrrole methylase"/>
    <property type="match status" value="1"/>
</dbReference>
<sequence>MIYLVGTPLGNLEDITLRAIRVLGEADVVACESKERALKLLSHLQIKKPLIYLREASRASDVKRIIELHKQGKTVAVTTDAGMPGISDPGAYLVRELSAQGIPFTVVPGPSALCMSITVSGLEEPWAFLGFLPLKEGKRRRELEKFLPLNIGLVIYEGPHRVGKLLSLLNELCPQRKVALLRELTKLHEEVQVGYPHELIKDSYKGEFVVVVYPSQEGT</sequence>
<proteinExistence type="inferred from homology"/>
<organism>
    <name type="scientific">Coprothermobacter proteolyticus (strain ATCC 35245 / DSM 5265 / OCM 4 / BT)</name>
    <dbReference type="NCBI Taxonomy" id="309798"/>
    <lineage>
        <taxon>Bacteria</taxon>
        <taxon>Pseudomonadati</taxon>
        <taxon>Coprothermobacterota</taxon>
        <taxon>Coprothermobacteria</taxon>
        <taxon>Coprothermobacterales</taxon>
        <taxon>Coprothermobacteraceae</taxon>
        <taxon>Coprothermobacter</taxon>
    </lineage>
</organism>
<name>RSMI_COPPD</name>
<feature type="chain" id="PRO_0000394485" description="Ribosomal RNA small subunit methyltransferase I">
    <location>
        <begin position="1"/>
        <end position="219"/>
    </location>
</feature>
<gene>
    <name evidence="1" type="primary">rsmI</name>
    <name type="ordered locus">COPRO5265_0421</name>
</gene>
<protein>
    <recommendedName>
        <fullName evidence="1">Ribosomal RNA small subunit methyltransferase I</fullName>
        <ecNumber evidence="1">2.1.1.198</ecNumber>
    </recommendedName>
    <alternativeName>
        <fullName evidence="1">16S rRNA 2'-O-ribose C1402 methyltransferase</fullName>
    </alternativeName>
    <alternativeName>
        <fullName evidence="1">rRNA (cytidine-2'-O-)-methyltransferase RsmI</fullName>
    </alternativeName>
</protein>
<evidence type="ECO:0000255" key="1">
    <source>
        <dbReference type="HAMAP-Rule" id="MF_01877"/>
    </source>
</evidence>
<keyword id="KW-0963">Cytoplasm</keyword>
<keyword id="KW-0489">Methyltransferase</keyword>
<keyword id="KW-1185">Reference proteome</keyword>
<keyword id="KW-0698">rRNA processing</keyword>
<keyword id="KW-0949">S-adenosyl-L-methionine</keyword>
<keyword id="KW-0808">Transferase</keyword>
<accession>B5Y7N9</accession>
<reference key="1">
    <citation type="submission" date="2008-08" db="EMBL/GenBank/DDBJ databases">
        <title>The complete genome sequence of Coprothermobacter proteolyticus strain ATCC 5245 / DSM 5265 / BT.</title>
        <authorList>
            <person name="Dodson R.J."/>
            <person name="Durkin A.S."/>
            <person name="Wu M."/>
            <person name="Eisen J."/>
            <person name="Sutton G."/>
        </authorList>
    </citation>
    <scope>NUCLEOTIDE SEQUENCE [LARGE SCALE GENOMIC DNA]</scope>
    <source>
        <strain>ATCC 35245 / DSM 5265 / OCM 4 / BT</strain>
    </source>
</reference>